<accession>Q6ZPR4</accession>
<accession>B2RUK3</accession>
<accession>C0KTP6</accession>
<accession>Q8C3E7</accession>
<name>KCNT1_MOUSE</name>
<organism>
    <name type="scientific">Mus musculus</name>
    <name type="common">Mouse</name>
    <dbReference type="NCBI Taxonomy" id="10090"/>
    <lineage>
        <taxon>Eukaryota</taxon>
        <taxon>Metazoa</taxon>
        <taxon>Chordata</taxon>
        <taxon>Craniata</taxon>
        <taxon>Vertebrata</taxon>
        <taxon>Euteleostomi</taxon>
        <taxon>Mammalia</taxon>
        <taxon>Eutheria</taxon>
        <taxon>Euarchontoglires</taxon>
        <taxon>Glires</taxon>
        <taxon>Rodentia</taxon>
        <taxon>Myomorpha</taxon>
        <taxon>Muroidea</taxon>
        <taxon>Muridae</taxon>
        <taxon>Murinae</taxon>
        <taxon>Mus</taxon>
        <taxon>Mus</taxon>
    </lineage>
</organism>
<feature type="chain" id="PRO_0000054091" description="Potassium channel subfamily T member 1">
    <location>
        <begin position="1"/>
        <end position="1224"/>
    </location>
</feature>
<feature type="topological domain" description="Cytoplasmic" evidence="15">
    <location>
        <begin position="1"/>
        <end position="79"/>
    </location>
</feature>
<feature type="transmembrane region" description="Helical; Name=Segment S1" evidence="1">
    <location>
        <begin position="80"/>
        <end position="112"/>
    </location>
</feature>
<feature type="topological domain" description="Extracellular" evidence="15">
    <location>
        <begin position="113"/>
        <end position="139"/>
    </location>
</feature>
<feature type="transmembrane region" description="Helical; Name=Segment S2" evidence="1">
    <location>
        <begin position="140"/>
        <end position="164"/>
    </location>
</feature>
<feature type="topological domain" description="Cytoplasmic" evidence="15">
    <location>
        <begin position="165"/>
        <end position="178"/>
    </location>
</feature>
<feature type="transmembrane region" description="Helical; Name=Segment S3" evidence="1">
    <location>
        <begin position="179"/>
        <end position="194"/>
    </location>
</feature>
<feature type="topological domain" description="Extracellular" evidence="15">
    <location>
        <begin position="195"/>
        <end position="201"/>
    </location>
</feature>
<feature type="transmembrane region" description="Helical; Name=Segment S4" evidence="1">
    <location>
        <begin position="202"/>
        <end position="219"/>
    </location>
</feature>
<feature type="topological domain" description="Cytoplasmic" evidence="15">
    <location>
        <begin position="220"/>
        <end position="232"/>
    </location>
</feature>
<feature type="transmembrane region" description="Helical; Name=Segment S5" evidence="1">
    <location>
        <begin position="233"/>
        <end position="260"/>
    </location>
</feature>
<feature type="topological domain" description="Extracellular" evidence="15">
    <location>
        <begin position="261"/>
        <end position="267"/>
    </location>
</feature>
<feature type="intramembrane region" description="Pore-forming" evidence="1">
    <location>
        <begin position="268"/>
        <end position="288"/>
    </location>
</feature>
<feature type="topological domain" description="Extracellular" evidence="15">
    <location>
        <begin position="289"/>
        <end position="290"/>
    </location>
</feature>
<feature type="transmembrane region" description="Helical; Name=Segment S6" evidence="1">
    <location>
        <begin position="291"/>
        <end position="324"/>
    </location>
</feature>
<feature type="topological domain" description="Cytoplasmic" evidence="15">
    <location>
        <begin position="325"/>
        <end position="1224"/>
    </location>
</feature>
<feature type="domain" description="RCK N-terminal 1" evidence="4">
    <location>
        <begin position="338"/>
        <end position="474"/>
    </location>
</feature>
<feature type="domain" description="RCK N-terminal 2" evidence="4">
    <location>
        <begin position="767"/>
        <end position="907"/>
    </location>
</feature>
<feature type="region of interest" description="Disordered" evidence="5">
    <location>
        <begin position="1"/>
        <end position="37"/>
    </location>
</feature>
<feature type="region of interest" description="Disordered" evidence="5">
    <location>
        <begin position="644"/>
        <end position="675"/>
    </location>
</feature>
<feature type="region of interest" description="Disordered" evidence="5">
    <location>
        <begin position="1038"/>
        <end position="1066"/>
    </location>
</feature>
<feature type="region of interest" description="Disordered" evidence="5">
    <location>
        <begin position="1198"/>
        <end position="1224"/>
    </location>
</feature>
<feature type="compositionally biased region" description="Low complexity" evidence="5">
    <location>
        <begin position="13"/>
        <end position="27"/>
    </location>
</feature>
<feature type="compositionally biased region" description="Polar residues" evidence="5">
    <location>
        <begin position="663"/>
        <end position="673"/>
    </location>
</feature>
<feature type="compositionally biased region" description="Low complexity" evidence="5">
    <location>
        <begin position="1045"/>
        <end position="1055"/>
    </location>
</feature>
<feature type="compositionally biased region" description="Low complexity" evidence="5">
    <location>
        <begin position="1198"/>
        <end position="1215"/>
    </location>
</feature>
<feature type="binding site" evidence="1">
    <location>
        <position position="282"/>
    </location>
    <ligand>
        <name>K(+)</name>
        <dbReference type="ChEBI" id="CHEBI:29103"/>
        <label>1</label>
        <note>ligand shared between homotetrameric partners</note>
    </ligand>
</feature>
<feature type="binding site" evidence="1">
    <location>
        <position position="283"/>
    </location>
    <ligand>
        <name>K(+)</name>
        <dbReference type="ChEBI" id="CHEBI:29103"/>
        <label>1</label>
        <note>ligand shared between homotetrameric partners</note>
    </ligand>
</feature>
<feature type="binding site" evidence="1">
    <location>
        <position position="499"/>
    </location>
    <ligand>
        <name>Na(+)</name>
        <dbReference type="ChEBI" id="CHEBI:29101"/>
        <label>1</label>
    </ligand>
</feature>
<feature type="binding site" evidence="1">
    <location>
        <position position="502"/>
    </location>
    <ligand>
        <name>Na(+)</name>
        <dbReference type="ChEBI" id="CHEBI:29101"/>
        <label>1</label>
    </ligand>
</feature>
<feature type="binding site" evidence="1">
    <location>
        <position position="524"/>
    </location>
    <ligand>
        <name>Na(+)</name>
        <dbReference type="ChEBI" id="CHEBI:29101"/>
        <label>1</label>
    </ligand>
</feature>
<feature type="binding site" evidence="1">
    <location>
        <position position="526"/>
    </location>
    <ligand>
        <name>Na(+)</name>
        <dbReference type="ChEBI" id="CHEBI:29101"/>
        <label>1</label>
    </ligand>
</feature>
<feature type="binding site" evidence="1">
    <location>
        <position position="744"/>
    </location>
    <ligand>
        <name>Zn(2+)</name>
        <dbReference type="ChEBI" id="CHEBI:29105"/>
    </ligand>
</feature>
<feature type="binding site" evidence="1">
    <location>
        <position position="745"/>
    </location>
    <ligand>
        <name>Zn(2+)</name>
        <dbReference type="ChEBI" id="CHEBI:29105"/>
    </ligand>
</feature>
<feature type="binding site" evidence="1">
    <location>
        <position position="747"/>
    </location>
    <ligand>
        <name>K(+)</name>
        <dbReference type="ChEBI" id="CHEBI:29103"/>
        <label>3</label>
    </ligand>
</feature>
<feature type="binding site" evidence="1">
    <location>
        <position position="747"/>
    </location>
    <ligand>
        <name>Na(+)</name>
        <dbReference type="ChEBI" id="CHEBI:29101"/>
        <label>2</label>
    </ligand>
</feature>
<feature type="binding site" evidence="1">
    <location>
        <position position="750"/>
    </location>
    <ligand>
        <name>K(+)</name>
        <dbReference type="ChEBI" id="CHEBI:29103"/>
        <label>3</label>
    </ligand>
</feature>
<feature type="binding site" evidence="1">
    <location>
        <position position="750"/>
    </location>
    <ligand>
        <name>Na(+)</name>
        <dbReference type="ChEBI" id="CHEBI:29101"/>
        <label>2</label>
    </ligand>
</feature>
<feature type="binding site" evidence="1">
    <location>
        <position position="752"/>
    </location>
    <ligand>
        <name>Zn(2+)</name>
        <dbReference type="ChEBI" id="CHEBI:29105"/>
    </ligand>
</feature>
<feature type="binding site" evidence="1">
    <location>
        <position position="754"/>
    </location>
    <ligand>
        <name>Zn(2+)</name>
        <dbReference type="ChEBI" id="CHEBI:29105"/>
    </ligand>
</feature>
<feature type="binding site" evidence="1">
    <location>
        <position position="755"/>
    </location>
    <ligand>
        <name>K(+)</name>
        <dbReference type="ChEBI" id="CHEBI:29103"/>
        <label>3</label>
    </ligand>
</feature>
<feature type="binding site" evidence="1">
    <location>
        <position position="757"/>
    </location>
    <ligand>
        <name>K(+)</name>
        <dbReference type="ChEBI" id="CHEBI:29103"/>
        <label>3</label>
    </ligand>
</feature>
<feature type="binding site" evidence="1">
    <location>
        <position position="757"/>
    </location>
    <ligand>
        <name>Na(+)</name>
        <dbReference type="ChEBI" id="CHEBI:29101"/>
        <label>2</label>
    </ligand>
</feature>
<feature type="binding site" evidence="1">
    <location>
        <position position="763"/>
    </location>
    <ligand>
        <name>K(+)</name>
        <dbReference type="ChEBI" id="CHEBI:29103"/>
        <label>3</label>
    </ligand>
</feature>
<feature type="binding site" evidence="1">
    <location>
        <position position="764"/>
    </location>
    <ligand>
        <name>K(+)</name>
        <dbReference type="ChEBI" id="CHEBI:29103"/>
        <label>2</label>
    </ligand>
</feature>
<feature type="binding site" evidence="1">
    <location>
        <position position="765"/>
    </location>
    <ligand>
        <name>Na(+)</name>
        <dbReference type="ChEBI" id="CHEBI:29101"/>
        <label>2</label>
    </ligand>
</feature>
<feature type="binding site" evidence="1">
    <location>
        <position position="773"/>
    </location>
    <ligand>
        <name>K(+)</name>
        <dbReference type="ChEBI" id="CHEBI:29103"/>
        <label>2</label>
    </ligand>
</feature>
<feature type="binding site" evidence="1">
    <location>
        <position position="804"/>
    </location>
    <ligand>
        <name>K(+)</name>
        <dbReference type="ChEBI" id="CHEBI:29103"/>
        <label>2</label>
    </ligand>
</feature>
<feature type="binding site" evidence="1">
    <location>
        <position position="806"/>
    </location>
    <ligand>
        <name>K(+)</name>
        <dbReference type="ChEBI" id="CHEBI:29103"/>
        <label>2</label>
    </ligand>
</feature>
<feature type="binding site" evidence="1">
    <location>
        <position position="828"/>
    </location>
    <ligand>
        <name>K(+)</name>
        <dbReference type="ChEBI" id="CHEBI:29103"/>
        <label>2</label>
    </ligand>
</feature>
<feature type="binding site" evidence="1">
    <location>
        <position position="851"/>
    </location>
    <ligand>
        <name>K(+)</name>
        <dbReference type="ChEBI" id="CHEBI:29103"/>
        <label>2</label>
    </ligand>
</feature>
<feature type="glycosylation site" description="N-linked (GlcNAc...) asparagine" evidence="3">
    <location>
        <position position="119"/>
    </location>
</feature>
<feature type="glycosylation site" description="N-linked (GlcNAc...) asparagine" evidence="3">
    <location>
        <position position="123"/>
    </location>
</feature>
<feature type="splice variant" id="VSP_062459" description="In isoform 2.">
    <original>ARAKLPRSPSEGKAGPGDTPAGAAAPEEPHGLSPLLPARGGGSVGSDVGQR</original>
    <variation>NDLDTEVLPLPPRYRFRDLLLGDQPFPNDDRLHVEDFSLDSSLSQ</variation>
    <location>
        <begin position="2"/>
        <end position="52"/>
    </location>
</feature>
<protein>
    <recommendedName>
        <fullName>Potassium channel subfamily T member 1</fullName>
    </recommendedName>
</protein>
<keyword id="KW-0877">Alternative promoter usage</keyword>
<keyword id="KW-0106">Calcium</keyword>
<keyword id="KW-1003">Cell membrane</keyword>
<keyword id="KW-0325">Glycoprotein</keyword>
<keyword id="KW-0407">Ion channel</keyword>
<keyword id="KW-0406">Ion transport</keyword>
<keyword id="KW-0472">Membrane</keyword>
<keyword id="KW-0479">Metal-binding</keyword>
<keyword id="KW-0597">Phosphoprotein</keyword>
<keyword id="KW-0630">Potassium</keyword>
<keyword id="KW-0631">Potassium channel</keyword>
<keyword id="KW-0633">Potassium transport</keyword>
<keyword id="KW-1185">Reference proteome</keyword>
<keyword id="KW-0915">Sodium</keyword>
<keyword id="KW-0812">Transmembrane</keyword>
<keyword id="KW-1133">Transmembrane helix</keyword>
<keyword id="KW-0813">Transport</keyword>
<keyword id="KW-0862">Zinc</keyword>
<reference key="1">
    <citation type="journal article" date="2004" name="Genome Res.">
        <title>The status, quality, and expansion of the NIH full-length cDNA project: the Mammalian Gene Collection (MGC).</title>
        <authorList>
            <consortium name="The MGC Project Team"/>
        </authorList>
    </citation>
    <scope>NUCLEOTIDE SEQUENCE [LARGE SCALE MRNA]</scope>
    <source>
        <tissue>Brain</tissue>
    </source>
</reference>
<reference key="2">
    <citation type="journal article" date="2005" name="Science">
        <title>The transcriptional landscape of the mammalian genome.</title>
        <authorList>
            <person name="Carninci P."/>
            <person name="Kasukawa T."/>
            <person name="Katayama S."/>
            <person name="Gough J."/>
            <person name="Frith M.C."/>
            <person name="Maeda N."/>
            <person name="Oyama R."/>
            <person name="Ravasi T."/>
            <person name="Lenhard B."/>
            <person name="Wells C."/>
            <person name="Kodzius R."/>
            <person name="Shimokawa K."/>
            <person name="Bajic V.B."/>
            <person name="Brenner S.E."/>
            <person name="Batalov S."/>
            <person name="Forrest A.R."/>
            <person name="Zavolan M."/>
            <person name="Davis M.J."/>
            <person name="Wilming L.G."/>
            <person name="Aidinis V."/>
            <person name="Allen J.E."/>
            <person name="Ambesi-Impiombato A."/>
            <person name="Apweiler R."/>
            <person name="Aturaliya R.N."/>
            <person name="Bailey T.L."/>
            <person name="Bansal M."/>
            <person name="Baxter L."/>
            <person name="Beisel K.W."/>
            <person name="Bersano T."/>
            <person name="Bono H."/>
            <person name="Chalk A.M."/>
            <person name="Chiu K.P."/>
            <person name="Choudhary V."/>
            <person name="Christoffels A."/>
            <person name="Clutterbuck D.R."/>
            <person name="Crowe M.L."/>
            <person name="Dalla E."/>
            <person name="Dalrymple B.P."/>
            <person name="de Bono B."/>
            <person name="Della Gatta G."/>
            <person name="di Bernardo D."/>
            <person name="Down T."/>
            <person name="Engstrom P."/>
            <person name="Fagiolini M."/>
            <person name="Faulkner G."/>
            <person name="Fletcher C.F."/>
            <person name="Fukushima T."/>
            <person name="Furuno M."/>
            <person name="Futaki S."/>
            <person name="Gariboldi M."/>
            <person name="Georgii-Hemming P."/>
            <person name="Gingeras T.R."/>
            <person name="Gojobori T."/>
            <person name="Green R.E."/>
            <person name="Gustincich S."/>
            <person name="Harbers M."/>
            <person name="Hayashi Y."/>
            <person name="Hensch T.K."/>
            <person name="Hirokawa N."/>
            <person name="Hill D."/>
            <person name="Huminiecki L."/>
            <person name="Iacono M."/>
            <person name="Ikeo K."/>
            <person name="Iwama A."/>
            <person name="Ishikawa T."/>
            <person name="Jakt M."/>
            <person name="Kanapin A."/>
            <person name="Katoh M."/>
            <person name="Kawasawa Y."/>
            <person name="Kelso J."/>
            <person name="Kitamura H."/>
            <person name="Kitano H."/>
            <person name="Kollias G."/>
            <person name="Krishnan S.P."/>
            <person name="Kruger A."/>
            <person name="Kummerfeld S.K."/>
            <person name="Kurochkin I.V."/>
            <person name="Lareau L.F."/>
            <person name="Lazarevic D."/>
            <person name="Lipovich L."/>
            <person name="Liu J."/>
            <person name="Liuni S."/>
            <person name="McWilliam S."/>
            <person name="Madan Babu M."/>
            <person name="Madera M."/>
            <person name="Marchionni L."/>
            <person name="Matsuda H."/>
            <person name="Matsuzawa S."/>
            <person name="Miki H."/>
            <person name="Mignone F."/>
            <person name="Miyake S."/>
            <person name="Morris K."/>
            <person name="Mottagui-Tabar S."/>
            <person name="Mulder N."/>
            <person name="Nakano N."/>
            <person name="Nakauchi H."/>
            <person name="Ng P."/>
            <person name="Nilsson R."/>
            <person name="Nishiguchi S."/>
            <person name="Nishikawa S."/>
            <person name="Nori F."/>
            <person name="Ohara O."/>
            <person name="Okazaki Y."/>
            <person name="Orlando V."/>
            <person name="Pang K.C."/>
            <person name="Pavan W.J."/>
            <person name="Pavesi G."/>
            <person name="Pesole G."/>
            <person name="Petrovsky N."/>
            <person name="Piazza S."/>
            <person name="Reed J."/>
            <person name="Reid J.F."/>
            <person name="Ring B.Z."/>
            <person name="Ringwald M."/>
            <person name="Rost B."/>
            <person name="Ruan Y."/>
            <person name="Salzberg S.L."/>
            <person name="Sandelin A."/>
            <person name="Schneider C."/>
            <person name="Schoenbach C."/>
            <person name="Sekiguchi K."/>
            <person name="Semple C.A."/>
            <person name="Seno S."/>
            <person name="Sessa L."/>
            <person name="Sheng Y."/>
            <person name="Shibata Y."/>
            <person name="Shimada H."/>
            <person name="Shimada K."/>
            <person name="Silva D."/>
            <person name="Sinclair B."/>
            <person name="Sperling S."/>
            <person name="Stupka E."/>
            <person name="Sugiura K."/>
            <person name="Sultana R."/>
            <person name="Takenaka Y."/>
            <person name="Taki K."/>
            <person name="Tammoja K."/>
            <person name="Tan S.L."/>
            <person name="Tang S."/>
            <person name="Taylor M.S."/>
            <person name="Tegner J."/>
            <person name="Teichmann S.A."/>
            <person name="Ueda H.R."/>
            <person name="van Nimwegen E."/>
            <person name="Verardo R."/>
            <person name="Wei C.L."/>
            <person name="Yagi K."/>
            <person name="Yamanishi H."/>
            <person name="Zabarovsky E."/>
            <person name="Zhu S."/>
            <person name="Zimmer A."/>
            <person name="Hide W."/>
            <person name="Bult C."/>
            <person name="Grimmond S.M."/>
            <person name="Teasdale R.D."/>
            <person name="Liu E.T."/>
            <person name="Brusic V."/>
            <person name="Quackenbush J."/>
            <person name="Wahlestedt C."/>
            <person name="Mattick J.S."/>
            <person name="Hume D.A."/>
            <person name="Kai C."/>
            <person name="Sasaki D."/>
            <person name="Tomaru Y."/>
            <person name="Fukuda S."/>
            <person name="Kanamori-Katayama M."/>
            <person name="Suzuki M."/>
            <person name="Aoki J."/>
            <person name="Arakawa T."/>
            <person name="Iida J."/>
            <person name="Imamura K."/>
            <person name="Itoh M."/>
            <person name="Kato T."/>
            <person name="Kawaji H."/>
            <person name="Kawagashira N."/>
            <person name="Kawashima T."/>
            <person name="Kojima M."/>
            <person name="Kondo S."/>
            <person name="Konno H."/>
            <person name="Nakano K."/>
            <person name="Ninomiya N."/>
            <person name="Nishio T."/>
            <person name="Okada M."/>
            <person name="Plessy C."/>
            <person name="Shibata K."/>
            <person name="Shiraki T."/>
            <person name="Suzuki S."/>
            <person name="Tagami M."/>
            <person name="Waki K."/>
            <person name="Watahiki A."/>
            <person name="Okamura-Oho Y."/>
            <person name="Suzuki H."/>
            <person name="Kawai J."/>
            <person name="Hayashizaki Y."/>
        </authorList>
    </citation>
    <scope>NUCLEOTIDE SEQUENCE [LARGE SCALE MRNA] OF 1-297</scope>
    <source>
        <strain>C57BL/6J</strain>
        <tissue>Head</tissue>
    </source>
</reference>
<reference key="3">
    <citation type="journal article" date="2003" name="DNA Res.">
        <title>Prediction of the coding sequences of mouse homologues of KIAA gene: III. The complete nucleotide sequences of 500 mouse KIAA-homologous cDNAs identified by screening of terminal sequences of cDNA clones randomly sampled from size-fractionated libraries.</title>
        <authorList>
            <person name="Okazaki N."/>
            <person name="Kikuno R."/>
            <person name="Ohara R."/>
            <person name="Inamoto S."/>
            <person name="Koseki H."/>
            <person name="Hiraoka S."/>
            <person name="Saga Y."/>
            <person name="Nagase T."/>
            <person name="Ohara O."/>
            <person name="Koga H."/>
        </authorList>
    </citation>
    <scope>NUCLEOTIDE SEQUENCE [LARGE SCALE MRNA] OF 160-1224</scope>
    <source>
        <tissue>Brain</tissue>
    </source>
</reference>
<reference key="4">
    <citation type="journal article" date="2008" name="J. Physiol. (Lond.)">
        <title>Amino-termini isoforms of the Slack K+ channel, regulated by alternative promoters, differentially modulate rhythmic firing and adaptation.</title>
        <authorList>
            <person name="Brown M.R."/>
            <person name="Kronengold J."/>
            <person name="Gazula V.R."/>
            <person name="Spilianakis C.G."/>
            <person name="Flavell R.A."/>
            <person name="von Hehn C.A."/>
            <person name="Bhattacharjee A."/>
            <person name="Kaczmarek L.K."/>
        </authorList>
    </citation>
    <scope>NUCLEOTIDE SEQUENCE (ISOFORM 2)</scope>
    <scope>TISSUE SPECIFICITY</scope>
</reference>
<reference key="5">
    <citation type="journal article" date="2009" name="PLoS Biol.">
        <title>Lineage-specific biology revealed by a finished genome assembly of the mouse.</title>
        <authorList>
            <person name="Church D.M."/>
            <person name="Goodstadt L."/>
            <person name="Hillier L.W."/>
            <person name="Zody M.C."/>
            <person name="Goldstein S."/>
            <person name="She X."/>
            <person name="Bult C.J."/>
            <person name="Agarwala R."/>
            <person name="Cherry J.L."/>
            <person name="DiCuccio M."/>
            <person name="Hlavina W."/>
            <person name="Kapustin Y."/>
            <person name="Meric P."/>
            <person name="Maglott D."/>
            <person name="Birtle Z."/>
            <person name="Marques A.C."/>
            <person name="Graves T."/>
            <person name="Zhou S."/>
            <person name="Teague B."/>
            <person name="Potamousis K."/>
            <person name="Churas C."/>
            <person name="Place M."/>
            <person name="Herschleb J."/>
            <person name="Runnheim R."/>
            <person name="Forrest D."/>
            <person name="Amos-Landgraf J."/>
            <person name="Schwartz D.C."/>
            <person name="Cheng Z."/>
            <person name="Lindblad-Toh K."/>
            <person name="Eichler E.E."/>
            <person name="Ponting C.P."/>
        </authorList>
    </citation>
    <scope>NUCLEOTIDE SEQUENCE [LARGE SCALE GENOMIC DNA]</scope>
    <source>
        <strain>C57BL/6J</strain>
    </source>
</reference>
<reference key="6">
    <citation type="journal article" date="2010" name="Nat. Neurosci.">
        <title>Fragile X mental retardation protein controls gating of the sodium-activated potassium channel Slack.</title>
        <authorList>
            <person name="Brown M.R."/>
            <person name="Kronengold J."/>
            <person name="Gazula V.R."/>
            <person name="Chen Y."/>
            <person name="Strumbos J.G."/>
            <person name="Sigworth F.J."/>
            <person name="Navaratnam D."/>
            <person name="Kaczmarek L.K."/>
        </authorList>
    </citation>
    <scope>INTERACTION WITH FMR1</scope>
</reference>
<reference key="7">
    <citation type="journal article" date="2015" name="Biochem. Biophys. Rep.">
        <title>Identification of potential novel interaction partners of the sodium-activated potassium channels Slick and Slack in mouse brain.</title>
        <authorList>
            <person name="Rizzi S."/>
            <person name="Schwarzer C."/>
            <person name="Kremser L."/>
            <person name="Lindner H.H."/>
            <person name="Knaus H.G."/>
        </authorList>
    </citation>
    <scope>INTERACTION WITH KCNT2</scope>
    <scope>SUBCELLULAR LOCATION</scope>
</reference>
<reference key="8">
    <citation type="journal article" date="2015" name="Elife">
        <title>Knockout of Slo2.2 enhances itch, abolishes KNa current, and increases action potential firing frequency in DRG neurons.</title>
        <authorList>
            <person name="Martinez-Espinosa P.L."/>
            <person name="Wu J."/>
            <person name="Yang C."/>
            <person name="Gonzalez-Perez V."/>
            <person name="Zhou H."/>
            <person name="Liang H."/>
            <person name="Xia X.M."/>
            <person name="Lingle C.J."/>
        </authorList>
    </citation>
    <scope>FUNCTION</scope>
    <scope>TRANSPORTER ACTIVITY</scope>
    <scope>DISRUPTION PHENOTYPE</scope>
</reference>
<reference key="9">
    <citation type="journal article" date="2015" name="J. Neurosci.">
        <title>Slack channels expressed in sensory neurons control neuropathic pain in mice.</title>
        <authorList>
            <person name="Lu R."/>
            <person name="Bausch A.E."/>
            <person name="Kallenborn-Gerhardt W."/>
            <person name="Stoetzer C."/>
            <person name="Debruin N."/>
            <person name="Ruth P."/>
            <person name="Geisslinger G."/>
            <person name="Leffler A."/>
            <person name="Lukowski R."/>
            <person name="Schmidtko A."/>
        </authorList>
    </citation>
    <scope>FUNCTION</scope>
    <scope>DISRUPTION PHENOTYPE</scope>
</reference>
<reference key="10">
    <citation type="journal article" date="2020" name="Sci. Rep.">
        <title>Impaired motor skill learning and altered seizure susceptibility in mice with loss or gain of function of the Kcnt1 gene encoding Slack (KNa1.1) Na+-activated K+ channels.</title>
        <authorList>
            <person name="Quraishi I.H."/>
            <person name="Mercier M.R."/>
            <person name="McClure H."/>
            <person name="Couture R.L."/>
            <person name="Schwartz M.L."/>
            <person name="Lukowski R."/>
            <person name="Ruth P."/>
            <person name="Kaczmarek L.K."/>
        </authorList>
    </citation>
    <scope>FUNCTION</scope>
    <scope>DISRUPTION PHENOTYPE</scope>
</reference>
<reference key="11">
    <citation type="journal article" date="2021" name="Cell. Mol. Life Sci.">
        <title>The Na+-activated K+ channel Slack contributes to synaptic development and plasticity.</title>
        <authorList>
            <person name="Matt L."/>
            <person name="Pham T."/>
            <person name="Skrabak D."/>
            <person name="Hoffmann F."/>
            <person name="Eckert P."/>
            <person name="Yin J."/>
            <person name="Gisevius M."/>
            <person name="Ehinger R."/>
            <person name="Bausch A."/>
            <person name="Ueffing M."/>
            <person name="Boldt K."/>
            <person name="Ruth P."/>
            <person name="Lukowski R."/>
        </authorList>
    </citation>
    <scope>FUNCTION</scope>
    <scope>DISRUPTION PHENOTYPE</scope>
</reference>
<proteinExistence type="evidence at protein level"/>
<gene>
    <name type="primary">Kcnt1</name>
    <name type="synonym">Kiaa1422</name>
    <name evidence="12 13" type="synonym">Slack</name>
    <name evidence="14" type="synonym">Slo2.2</name>
</gene>
<dbReference type="EMBL" id="BC141190">
    <property type="protein sequence ID" value="AAI41191.1"/>
    <property type="molecule type" value="mRNA"/>
</dbReference>
<dbReference type="EMBL" id="BC171963">
    <property type="protein sequence ID" value="AAI71963.1"/>
    <property type="molecule type" value="mRNA"/>
</dbReference>
<dbReference type="EMBL" id="AK086119">
    <property type="protein sequence ID" value="BAC39614.1"/>
    <property type="molecule type" value="mRNA"/>
</dbReference>
<dbReference type="EMBL" id="FJ628361">
    <property type="protein sequence ID" value="ACM90117.1"/>
    <property type="molecule type" value="mRNA"/>
</dbReference>
<dbReference type="EMBL" id="AK129355">
    <property type="protein sequence ID" value="BAC98165.1"/>
    <property type="molecule type" value="mRNA"/>
</dbReference>
<dbReference type="CCDS" id="CCDS50537.1">
    <molecule id="Q6ZPR4-2"/>
</dbReference>
<dbReference type="CCDS" id="CCDS79757.1">
    <molecule id="Q6ZPR4-1"/>
</dbReference>
<dbReference type="RefSeq" id="NP_001138875.1">
    <molecule id="Q6ZPR4-2"/>
    <property type="nucleotide sequence ID" value="NM_001145403.3"/>
</dbReference>
<dbReference type="RefSeq" id="NP_001289280.1">
    <molecule id="Q6ZPR4-1"/>
    <property type="nucleotide sequence ID" value="NM_001302351.2"/>
</dbReference>
<dbReference type="RefSeq" id="NP_780671.2">
    <property type="nucleotide sequence ID" value="NM_175462.4"/>
</dbReference>
<dbReference type="SMR" id="Q6ZPR4"/>
<dbReference type="BioGRID" id="230652">
    <property type="interactions" value="2"/>
</dbReference>
<dbReference type="FunCoup" id="Q6ZPR4">
    <property type="interactions" value="955"/>
</dbReference>
<dbReference type="IntAct" id="Q6ZPR4">
    <property type="interactions" value="3"/>
</dbReference>
<dbReference type="MINT" id="Q6ZPR4"/>
<dbReference type="STRING" id="10090.ENSMUSP00000039058"/>
<dbReference type="BindingDB" id="Q6ZPR4"/>
<dbReference type="ChEMBL" id="CHEMBL4739694"/>
<dbReference type="GuidetoPHARMACOLOGY" id="385"/>
<dbReference type="GlyCosmos" id="Q6ZPR4">
    <property type="glycosylation" value="2 sites, No reported glycans"/>
</dbReference>
<dbReference type="GlyGen" id="Q6ZPR4">
    <property type="glycosylation" value="5 sites, 2 N-linked glycans (2 sites)"/>
</dbReference>
<dbReference type="iPTMnet" id="Q6ZPR4"/>
<dbReference type="PhosphoSitePlus" id="Q6ZPR4"/>
<dbReference type="PaxDb" id="10090-ENSMUSP00000039058"/>
<dbReference type="ProteomicsDB" id="268967"/>
<dbReference type="ProteomicsDB" id="331165"/>
<dbReference type="ABCD" id="Q6ZPR4">
    <property type="antibodies" value="1 sequenced antibody"/>
</dbReference>
<dbReference type="Antibodypedia" id="32072">
    <property type="antibodies" value="174 antibodies from 26 providers"/>
</dbReference>
<dbReference type="DNASU" id="227632"/>
<dbReference type="Ensembl" id="ENSMUST00000114172.6">
    <molecule id="Q6ZPR4-1"/>
    <property type="protein sequence ID" value="ENSMUSP00000109809.3"/>
    <property type="gene ID" value="ENSMUSG00000058740.15"/>
</dbReference>
<dbReference type="Ensembl" id="ENSMUST00000171268.8">
    <molecule id="Q6ZPR4-2"/>
    <property type="protein sequence ID" value="ENSMUSP00000132212.2"/>
    <property type="gene ID" value="ENSMUSG00000058740.15"/>
</dbReference>
<dbReference type="GeneID" id="227632"/>
<dbReference type="KEGG" id="mmu:227632"/>
<dbReference type="UCSC" id="uc008itq.2">
    <molecule id="Q6ZPR4-1"/>
    <property type="organism name" value="mouse"/>
</dbReference>
<dbReference type="AGR" id="MGI:1924627"/>
<dbReference type="CTD" id="57582"/>
<dbReference type="MGI" id="MGI:1924627">
    <property type="gene designation" value="Kcnt1"/>
</dbReference>
<dbReference type="VEuPathDB" id="HostDB:ENSMUSG00000058740"/>
<dbReference type="eggNOG" id="KOG3193">
    <property type="taxonomic scope" value="Eukaryota"/>
</dbReference>
<dbReference type="GeneTree" id="ENSGT00940000156880"/>
<dbReference type="InParanoid" id="Q6ZPR4"/>
<dbReference type="OrthoDB" id="257992at2759"/>
<dbReference type="BioGRID-ORCS" id="227632">
    <property type="hits" value="3 hits in 77 CRISPR screens"/>
</dbReference>
<dbReference type="ChiTaRS" id="Kcnt1">
    <property type="organism name" value="mouse"/>
</dbReference>
<dbReference type="PRO" id="PR:Q6ZPR4"/>
<dbReference type="Proteomes" id="UP000000589">
    <property type="component" value="Chromosome 2"/>
</dbReference>
<dbReference type="RNAct" id="Q6ZPR4">
    <property type="molecule type" value="protein"/>
</dbReference>
<dbReference type="Bgee" id="ENSMUSG00000058740">
    <property type="expression patterns" value="Expressed in cerebellar cortex and 115 other cell types or tissues"/>
</dbReference>
<dbReference type="ExpressionAtlas" id="Q6ZPR4">
    <property type="expression patterns" value="baseline and differential"/>
</dbReference>
<dbReference type="GO" id="GO:0005886">
    <property type="term" value="C:plasma membrane"/>
    <property type="evidence" value="ECO:0000314"/>
    <property type="project" value="UniProtKB"/>
</dbReference>
<dbReference type="GO" id="GO:0098839">
    <property type="term" value="C:postsynaptic density membrane"/>
    <property type="evidence" value="ECO:0000314"/>
    <property type="project" value="SynGO"/>
</dbReference>
<dbReference type="GO" id="GO:0046872">
    <property type="term" value="F:metal ion binding"/>
    <property type="evidence" value="ECO:0007669"/>
    <property type="project" value="UniProtKB-KW"/>
</dbReference>
<dbReference type="GO" id="GO:0015271">
    <property type="term" value="F:outward rectifier potassium channel activity"/>
    <property type="evidence" value="ECO:0000250"/>
    <property type="project" value="UniProtKB"/>
</dbReference>
<dbReference type="GO" id="GO:0071805">
    <property type="term" value="P:potassium ion transmembrane transport"/>
    <property type="evidence" value="ECO:0000250"/>
    <property type="project" value="UniProtKB"/>
</dbReference>
<dbReference type="GO" id="GO:0051289">
    <property type="term" value="P:protein homotetramerization"/>
    <property type="evidence" value="ECO:0000250"/>
    <property type="project" value="UniProtKB"/>
</dbReference>
<dbReference type="GO" id="GO:0060078">
    <property type="term" value="P:regulation of postsynaptic membrane potential"/>
    <property type="evidence" value="ECO:0000314"/>
    <property type="project" value="SynGO"/>
</dbReference>
<dbReference type="FunFam" id="3.40.50.720:FF:000011">
    <property type="entry name" value="Potassium channel subfamily T member 1"/>
    <property type="match status" value="1"/>
</dbReference>
<dbReference type="FunFam" id="3.40.50.720:FF:000034">
    <property type="entry name" value="Potassium channel subfamily T member 1"/>
    <property type="match status" value="1"/>
</dbReference>
<dbReference type="FunFam" id="1.10.287.70:FF:000069">
    <property type="entry name" value="Potassium sodium-activated channel subfamily T member 1"/>
    <property type="match status" value="1"/>
</dbReference>
<dbReference type="Gene3D" id="1.10.287.70">
    <property type="match status" value="1"/>
</dbReference>
<dbReference type="Gene3D" id="3.40.50.720">
    <property type="entry name" value="NAD(P)-binding Rossmann-like Domain"/>
    <property type="match status" value="2"/>
</dbReference>
<dbReference type="InterPro" id="IPR003929">
    <property type="entry name" value="K_chnl_BK_asu"/>
</dbReference>
<dbReference type="InterPro" id="IPR013099">
    <property type="entry name" value="K_chnl_dom"/>
</dbReference>
<dbReference type="InterPro" id="IPR047871">
    <property type="entry name" value="K_chnl_Slo-like"/>
</dbReference>
<dbReference type="InterPro" id="IPR003148">
    <property type="entry name" value="RCK_N"/>
</dbReference>
<dbReference type="PANTHER" id="PTHR10027">
    <property type="entry name" value="CALCIUM-ACTIVATED POTASSIUM CHANNEL ALPHA CHAIN"/>
    <property type="match status" value="1"/>
</dbReference>
<dbReference type="PANTHER" id="PTHR10027:SF14">
    <property type="entry name" value="POTASSIUM CHANNEL SUBFAMILY T MEMBER 1"/>
    <property type="match status" value="1"/>
</dbReference>
<dbReference type="Pfam" id="PF03493">
    <property type="entry name" value="BK_channel_a"/>
    <property type="match status" value="1"/>
</dbReference>
<dbReference type="Pfam" id="PF07885">
    <property type="entry name" value="Ion_trans_2"/>
    <property type="match status" value="1"/>
</dbReference>
<dbReference type="Pfam" id="PF22614">
    <property type="entry name" value="Slo-like_RCK"/>
    <property type="match status" value="2"/>
</dbReference>
<dbReference type="SUPFAM" id="SSF81324">
    <property type="entry name" value="Voltage-gated potassium channels"/>
    <property type="match status" value="1"/>
</dbReference>
<dbReference type="PROSITE" id="PS51201">
    <property type="entry name" value="RCK_N"/>
    <property type="match status" value="2"/>
</dbReference>
<sequence>MARAKLPRSPSEGKAGPGDTPAGAAAPEEPHGLSPLLPARGGGSVGSDVGQRVQVEFYVNENTFKERLKLFFIKNQRSSLRIRLFNFSLKLLTCLLYIVRVLLDNPDQGIGCWGCTKYNYTFNGSSSEFHWAPILWVERKMALWVIQVIVATISFLETMLIIYLSYKGNIWEQIFHVSFVLEMINTLPFIITVFWPPLRNLFIPVFLNCWLAKHALENMINDFHRAILRTQSAMFNQVLILFCTLLCLVFTGTCGIQHLERAGGNLNLLTSFYFCIVTFSTVGFGDVTPKIWPSQLLVVILICVTLVVLPLQFEELVYLWMERQKSGGNYSRHRARTEKHVVLCVSSLKIDLLMDFLNEFYAHPRLQDYYVVILCPSEMDVQVRRVLQIPLWSQRVIYLQGSALKDQDLMRAKMDNGEACFILSSRNEVDRTAADHQTILRAWAVKDFAPNCPLYVQILKPENKFHVKFADHVVCEEECKYAMLALNCICPATSTLITLLVHTSRGQEGQESPEQWQRTYGRCSGNEVYHIRMGDSKFFREYEGKSFTYAAFHAHKKYGVCLIGLKREENKSILLNPGPRHILAASDTCFYINITKEENSAFIFKQEEKQKRRGLAGQALYEGPSRLPVHSIIASMGTVAMDLQNTDCRPSQGGSGGDGTKLTLPTENGSGSRRPSIAPVLELADSSALLPCDLLSDQSEDEVTPSDDEGLSVVEYVKGYPPNSPYIGSSPTLCHLLPVKAPFCCLRLDKGCKHNSYEDAKAYGFKNKLIIVSAETAGNGLYNFIVPLRAYYRSRRELNPIVLLLDNKPDHHFLEAICCFPMVYYMEGSVDNLDSLLQCGIIYADNLVVVDKESTMSAEEDYMADAKTIVNVQTMFRLFPSLSITTELTHPSNMRFMQFRAKDSYSLALSKLEKQERENGSNLAFMFRLPFAAGRVFSISMLDTLLYQSFVKDYMITITRLLLGLDTTPGSGYLCAMKVTEDDLWIRTYGRLFQKLCSSSAEIPIGIYRTECHVFSEPHDVRAQSQISVNMEDCEDTREAKGPWGTRAASGSGSTHGRHGGSADPVEHPLLRRKSLQWARKLSRKSTKQAGKAPVATDWITQQRLSLYRRSERQELSELVKNRMKHLGLPTTGYEDVANLTASDVMNRVNLGYLQDEMNDHHQNTLSYVLINPPPDTRLEPNDIVYLIRSDPLAHVASSSQSRKSSCSNKLSSCNPETRDETQL</sequence>
<evidence type="ECO:0000250" key="1">
    <source>
        <dbReference type="UniProtKB" id="Q5JUK3"/>
    </source>
</evidence>
<evidence type="ECO:0000250" key="2">
    <source>
        <dbReference type="UniProtKB" id="Q9Z258"/>
    </source>
</evidence>
<evidence type="ECO:0000255" key="3"/>
<evidence type="ECO:0000255" key="4">
    <source>
        <dbReference type="PROSITE-ProRule" id="PRU00543"/>
    </source>
</evidence>
<evidence type="ECO:0000256" key="5">
    <source>
        <dbReference type="SAM" id="MobiDB-lite"/>
    </source>
</evidence>
<evidence type="ECO:0000269" key="6">
    <source>
    </source>
</evidence>
<evidence type="ECO:0000269" key="7">
    <source>
    </source>
</evidence>
<evidence type="ECO:0000269" key="8">
    <source>
    </source>
</evidence>
<evidence type="ECO:0000269" key="9">
    <source>
    </source>
</evidence>
<evidence type="ECO:0000269" key="10">
    <source>
    </source>
</evidence>
<evidence type="ECO:0000269" key="11">
    <source>
    </source>
</evidence>
<evidence type="ECO:0000303" key="12">
    <source>
    </source>
</evidence>
<evidence type="ECO:0000303" key="13">
    <source>
    </source>
</evidence>
<evidence type="ECO:0000303" key="14">
    <source>
    </source>
</evidence>
<evidence type="ECO:0000305" key="15"/>
<comment type="function">
    <text evidence="1 2 7 8 10 11">Sodium-activated K(+) channel (PubMed:26559620). Acts as an important mediator of neuronal membrane excitability (By similarity). Contributes to the delayed outward currents (By similarity). Regulates neuronal bursting in sensory neurons (PubMed:25609627, PubMed:26559620). Contributes to synaptic development and plasticity (PubMed:32081855, PubMed:34664085).</text>
</comment>
<comment type="catalytic activity">
    <reaction evidence="8">
        <text>K(+)(in) = K(+)(out)</text>
        <dbReference type="Rhea" id="RHEA:29463"/>
        <dbReference type="ChEBI" id="CHEBI:29103"/>
    </reaction>
</comment>
<comment type="activity regulation">
    <text evidence="1 2">Activated by high intracellular Na(+) (By similarity). In addition to activation by Na(+), is cooperatively activated by intracellular Cl(-) levels (By similarity). Inhibited by Zn(2+) (By similarity). Activated upon stimulation of G-protein coupled receptors, such as CHRM1 and GRIA1 (By similarity).</text>
</comment>
<comment type="subunit">
    <text evidence="1 2">Homotetramer; which constitutes the Na(+)-activated K(+) channel (By similarity). Interacts with KCNT2; these heterodimer channels differ from the homomers in their unitary conductance, kinetic behavior, subcellular localization, and response to activation of protein kinase C (By similarity). Interacts (via C-terminus) with FMR1; this interaction alters gating properties of KCNT1 (By similarity). Interacts with CRBN via its cytoplasmic C-terminus (By similarity).</text>
</comment>
<comment type="subcellular location">
    <subcellularLocation>
        <location evidence="9">Cell membrane</location>
        <topology evidence="1">Multi-pass membrane protein</topology>
    </subcellularLocation>
</comment>
<comment type="alternative products">
    <event type="alternative promoter"/>
    <isoform>
        <id>Q6ZPR4-1</id>
        <name>1</name>
        <name evidence="12">Slack-B</name>
        <sequence type="displayed"/>
    </isoform>
    <isoform>
        <id>Q6ZPR4-2</id>
        <name>2</name>
        <name evidence="12">Slack-A</name>
        <sequence type="described" ref="VSP_062459"/>
    </isoform>
</comment>
<comment type="tissue specificity">
    <molecule>Isoform 2</molecule>
    <text evidence="6">Enriched in the brainstem and olfactory bulb and detected at significant levels in four different brain regions.</text>
</comment>
<comment type="domain">
    <text evidence="1">The cytoplasmic gating ring domain of the closed KCNT1 channel harbors multiple K(+) and Zn(2+) sites, which stabilize the channel in the closed conformation. Under low-Na(+) conditions, the abundant cytoplasmic K(+) ions stabilize the gating ring domain in a closed conformation. The open KCNT1 structure contains at least two Na(+)-sensitive sites in the RCKs where Na(+) binding induces expansion and rotation of the gating ring that opens the inner gate.</text>
</comment>
<comment type="domain">
    <text evidence="2">The cytoplasmic N-terminal domain facilitates the localization of heteromeric KCNT1/KCNT2 channels to the plasma membrane.</text>
</comment>
<comment type="PTM">
    <text evidence="2">Phosphorylated by protein kinase C. Phosphorylation of the C-terminal domain increases channel activity.</text>
</comment>
<comment type="disruption phenotype">
    <text evidence="7 8 10 11">Kcnt2-null mice exhibit impaired action potential firing in sensory neurons and increased mechanical hypersensitivity in neuropathic pain models (PubMed:25609627, PubMed:26559620). Deficient mice display impaired motor skill learning (PubMed:32081855). Kcnt2-null mice exhibit severely impaired synaptic function in the hippocampus of infant and milder deficits in adult Kcnt2-deficient mice (PubMed:34664085).</text>
</comment>
<comment type="similarity">
    <text evidence="15">Belongs to the potassium channel family. Calcium-activated (TC 1.A.1.3) subfamily. KCa4.1/KCNT1 sub-subfamily.</text>
</comment>